<keyword id="KW-0004">4Fe-4S</keyword>
<keyword id="KW-0408">Iron</keyword>
<keyword id="KW-0411">Iron-sulfur</keyword>
<keyword id="KW-0414">Isoprene biosynthesis</keyword>
<keyword id="KW-0479">Metal-binding</keyword>
<keyword id="KW-0560">Oxidoreductase</keyword>
<keyword id="KW-1185">Reference proteome</keyword>
<organism>
    <name type="scientific">Actinobacillus pleuropneumoniae serotype 5b (strain L20)</name>
    <dbReference type="NCBI Taxonomy" id="416269"/>
    <lineage>
        <taxon>Bacteria</taxon>
        <taxon>Pseudomonadati</taxon>
        <taxon>Pseudomonadota</taxon>
        <taxon>Gammaproteobacteria</taxon>
        <taxon>Pasteurellales</taxon>
        <taxon>Pasteurellaceae</taxon>
        <taxon>Actinobacillus</taxon>
    </lineage>
</organism>
<proteinExistence type="inferred from homology"/>
<evidence type="ECO:0000255" key="1">
    <source>
        <dbReference type="HAMAP-Rule" id="MF_00159"/>
    </source>
</evidence>
<accession>A3N1H8</accession>
<feature type="chain" id="PRO_1000097142" description="4-hydroxy-3-methylbut-2-en-1-yl diphosphate synthase (flavodoxin)">
    <location>
        <begin position="1"/>
        <end position="370"/>
    </location>
</feature>
<feature type="binding site" evidence="1">
    <location>
        <position position="271"/>
    </location>
    <ligand>
        <name>[4Fe-4S] cluster</name>
        <dbReference type="ChEBI" id="CHEBI:49883"/>
    </ligand>
</feature>
<feature type="binding site" evidence="1">
    <location>
        <position position="274"/>
    </location>
    <ligand>
        <name>[4Fe-4S] cluster</name>
        <dbReference type="ChEBI" id="CHEBI:49883"/>
    </ligand>
</feature>
<feature type="binding site" evidence="1">
    <location>
        <position position="306"/>
    </location>
    <ligand>
        <name>[4Fe-4S] cluster</name>
        <dbReference type="ChEBI" id="CHEBI:49883"/>
    </ligand>
</feature>
<feature type="binding site" evidence="1">
    <location>
        <position position="313"/>
    </location>
    <ligand>
        <name>[4Fe-4S] cluster</name>
        <dbReference type="ChEBI" id="CHEBI:49883"/>
    </ligand>
</feature>
<gene>
    <name evidence="1" type="primary">ispG</name>
    <name type="ordered locus">APL_1176</name>
</gene>
<sequence length="370" mass="40484">MSIHQSPIKRRESKKIWVGNVAVGGDAPISVQSMTNTRTTDVEATVAQIKSLERVGADIVRVSVPTMDAAEAFKVIKQQVNVPLVADIHFDYRIALKVAEYGVDCLRINPGNIGNEERIRAVVDCAKDKNIPIRIGVNAGSLERDLQEKYGEPTPQALLESALRHVDILDRFNFENFKVSVKASDVFLAVESYRLLAKQIVQPLHLGITEAGGARAGSVKSAVGLGLLLSEGIGDTLRISLAADPVEEVKVGFDILKSLRIRSRGINFIACPTCSRQEIDVIATVNALEQRLEDILTPMDVSIIGCVVNGPGEALISDLGVTGSNKMSGFYLDGVRQKERFDNEKLIDQLEAKIRARVAEQHNRIQIEQI</sequence>
<name>ISPG_ACTP2</name>
<dbReference type="EC" id="1.17.7.3" evidence="1"/>
<dbReference type="EMBL" id="CP000569">
    <property type="protein sequence ID" value="ABN74264.1"/>
    <property type="molecule type" value="Genomic_DNA"/>
</dbReference>
<dbReference type="RefSeq" id="WP_005598113.1">
    <property type="nucleotide sequence ID" value="NC_009053.1"/>
</dbReference>
<dbReference type="SMR" id="A3N1H8"/>
<dbReference type="STRING" id="416269.APL_1176"/>
<dbReference type="EnsemblBacteria" id="ABN74264">
    <property type="protein sequence ID" value="ABN74264"/>
    <property type="gene ID" value="APL_1176"/>
</dbReference>
<dbReference type="GeneID" id="48599413"/>
<dbReference type="KEGG" id="apl:APL_1176"/>
<dbReference type="eggNOG" id="COG0821">
    <property type="taxonomic scope" value="Bacteria"/>
</dbReference>
<dbReference type="HOGENOM" id="CLU_042258_0_0_6"/>
<dbReference type="UniPathway" id="UPA00056">
    <property type="reaction ID" value="UER00096"/>
</dbReference>
<dbReference type="Proteomes" id="UP000001432">
    <property type="component" value="Chromosome"/>
</dbReference>
<dbReference type="GO" id="GO:0051539">
    <property type="term" value="F:4 iron, 4 sulfur cluster binding"/>
    <property type="evidence" value="ECO:0007669"/>
    <property type="project" value="UniProtKB-UniRule"/>
</dbReference>
<dbReference type="GO" id="GO:0046429">
    <property type="term" value="F:4-hydroxy-3-methylbut-2-en-1-yl diphosphate synthase activity (ferredoxin)"/>
    <property type="evidence" value="ECO:0007669"/>
    <property type="project" value="UniProtKB-UniRule"/>
</dbReference>
<dbReference type="GO" id="GO:0141197">
    <property type="term" value="F:4-hydroxy-3-methylbut-2-enyl-diphosphate synthase activity (flavodoxin)"/>
    <property type="evidence" value="ECO:0007669"/>
    <property type="project" value="UniProtKB-EC"/>
</dbReference>
<dbReference type="GO" id="GO:0005506">
    <property type="term" value="F:iron ion binding"/>
    <property type="evidence" value="ECO:0007669"/>
    <property type="project" value="InterPro"/>
</dbReference>
<dbReference type="GO" id="GO:0019288">
    <property type="term" value="P:isopentenyl diphosphate biosynthetic process, methylerythritol 4-phosphate pathway"/>
    <property type="evidence" value="ECO:0007669"/>
    <property type="project" value="UniProtKB-UniRule"/>
</dbReference>
<dbReference type="GO" id="GO:0016114">
    <property type="term" value="P:terpenoid biosynthetic process"/>
    <property type="evidence" value="ECO:0007669"/>
    <property type="project" value="InterPro"/>
</dbReference>
<dbReference type="FunFam" id="3.20.20.20:FF:000001">
    <property type="entry name" value="4-hydroxy-3-methylbut-2-en-1-yl diphosphate synthase (flavodoxin)"/>
    <property type="match status" value="1"/>
</dbReference>
<dbReference type="Gene3D" id="3.20.20.20">
    <property type="entry name" value="Dihydropteroate synthase-like"/>
    <property type="match status" value="1"/>
</dbReference>
<dbReference type="Gene3D" id="3.30.413.10">
    <property type="entry name" value="Sulfite Reductase Hemoprotein, domain 1"/>
    <property type="match status" value="1"/>
</dbReference>
<dbReference type="HAMAP" id="MF_00159">
    <property type="entry name" value="IspG"/>
    <property type="match status" value="1"/>
</dbReference>
<dbReference type="InterPro" id="IPR011005">
    <property type="entry name" value="Dihydropteroate_synth-like_sf"/>
</dbReference>
<dbReference type="InterPro" id="IPR036849">
    <property type="entry name" value="Enolase-like_C_sf"/>
</dbReference>
<dbReference type="InterPro" id="IPR016425">
    <property type="entry name" value="IspG_bac"/>
</dbReference>
<dbReference type="InterPro" id="IPR004588">
    <property type="entry name" value="IspG_bac-typ"/>
</dbReference>
<dbReference type="InterPro" id="IPR045854">
    <property type="entry name" value="NO2/SO3_Rdtase_4Fe4S_sf"/>
</dbReference>
<dbReference type="NCBIfam" id="TIGR00612">
    <property type="entry name" value="ispG_gcpE"/>
    <property type="match status" value="1"/>
</dbReference>
<dbReference type="NCBIfam" id="NF001540">
    <property type="entry name" value="PRK00366.1"/>
    <property type="match status" value="1"/>
</dbReference>
<dbReference type="PANTHER" id="PTHR30454">
    <property type="entry name" value="4-HYDROXY-3-METHYLBUT-2-EN-1-YL DIPHOSPHATE SYNTHASE"/>
    <property type="match status" value="1"/>
</dbReference>
<dbReference type="PANTHER" id="PTHR30454:SF0">
    <property type="entry name" value="4-HYDROXY-3-METHYLBUT-2-EN-1-YL DIPHOSPHATE SYNTHASE (FERREDOXIN), CHLOROPLASTIC"/>
    <property type="match status" value="1"/>
</dbReference>
<dbReference type="Pfam" id="PF04551">
    <property type="entry name" value="GcpE"/>
    <property type="match status" value="1"/>
</dbReference>
<dbReference type="PIRSF" id="PIRSF004640">
    <property type="entry name" value="IspG"/>
    <property type="match status" value="1"/>
</dbReference>
<dbReference type="SUPFAM" id="SSF51604">
    <property type="entry name" value="Enolase C-terminal domain-like"/>
    <property type="match status" value="1"/>
</dbReference>
<dbReference type="SUPFAM" id="SSF56014">
    <property type="entry name" value="Nitrite and sulphite reductase 4Fe-4S domain-like"/>
    <property type="match status" value="1"/>
</dbReference>
<comment type="function">
    <text evidence="1">Converts 2C-methyl-D-erythritol 2,4-cyclodiphosphate (ME-2,4cPP) into 1-hydroxy-2-methyl-2-(E)-butenyl 4-diphosphate.</text>
</comment>
<comment type="catalytic activity">
    <reaction evidence="1">
        <text>(2E)-4-hydroxy-3-methylbut-2-enyl diphosphate + oxidized [flavodoxin] + H2O + 2 H(+) = 2-C-methyl-D-erythritol 2,4-cyclic diphosphate + reduced [flavodoxin]</text>
        <dbReference type="Rhea" id="RHEA:43604"/>
        <dbReference type="Rhea" id="RHEA-COMP:10622"/>
        <dbReference type="Rhea" id="RHEA-COMP:10623"/>
        <dbReference type="ChEBI" id="CHEBI:15377"/>
        <dbReference type="ChEBI" id="CHEBI:15378"/>
        <dbReference type="ChEBI" id="CHEBI:57618"/>
        <dbReference type="ChEBI" id="CHEBI:58210"/>
        <dbReference type="ChEBI" id="CHEBI:58483"/>
        <dbReference type="ChEBI" id="CHEBI:128753"/>
        <dbReference type="EC" id="1.17.7.3"/>
    </reaction>
</comment>
<comment type="cofactor">
    <cofactor evidence="1">
        <name>[4Fe-4S] cluster</name>
        <dbReference type="ChEBI" id="CHEBI:49883"/>
    </cofactor>
    <text evidence="1">Binds 1 [4Fe-4S] cluster.</text>
</comment>
<comment type="pathway">
    <text evidence="1">Isoprenoid biosynthesis; isopentenyl diphosphate biosynthesis via DXP pathway; isopentenyl diphosphate from 1-deoxy-D-xylulose 5-phosphate: step 5/6.</text>
</comment>
<comment type="similarity">
    <text evidence="1">Belongs to the IspG family.</text>
</comment>
<reference key="1">
    <citation type="journal article" date="2008" name="J. Bacteriol.">
        <title>The complete genome sequence of Actinobacillus pleuropneumoniae L20 (serotype 5b).</title>
        <authorList>
            <person name="Foote S.J."/>
            <person name="Bosse J.T."/>
            <person name="Bouevitch A.B."/>
            <person name="Langford P.R."/>
            <person name="Young N.M."/>
            <person name="Nash J.H.E."/>
        </authorList>
    </citation>
    <scope>NUCLEOTIDE SEQUENCE [LARGE SCALE GENOMIC DNA]</scope>
    <source>
        <strain>L20</strain>
    </source>
</reference>
<protein>
    <recommendedName>
        <fullName evidence="1">4-hydroxy-3-methylbut-2-en-1-yl diphosphate synthase (flavodoxin)</fullName>
        <ecNumber evidence="1">1.17.7.3</ecNumber>
    </recommendedName>
    <alternativeName>
        <fullName evidence="1">1-hydroxy-2-methyl-2-(E)-butenyl 4-diphosphate synthase</fullName>
    </alternativeName>
</protein>